<feature type="chain" id="PRO_0000452728" description="Type II NADH:quinone oxidoreductase NdhA">
    <location>
        <begin position="1"/>
        <end position="470"/>
    </location>
</feature>
<feature type="transmembrane region" description="Helical" evidence="2">
    <location>
        <begin position="389"/>
        <end position="409"/>
    </location>
</feature>
<feature type="active site" evidence="1">
    <location>
        <position position="184"/>
    </location>
</feature>
<feature type="binding site" evidence="1">
    <location>
        <begin position="21"/>
        <end position="25"/>
    </location>
    <ligand>
        <name>FAD</name>
        <dbReference type="ChEBI" id="CHEBI:57692"/>
    </ligand>
</feature>
<feature type="binding site" evidence="1">
    <location>
        <position position="89"/>
    </location>
    <ligand>
        <name>FAD</name>
        <dbReference type="ChEBI" id="CHEBI:57692"/>
    </ligand>
</feature>
<feature type="binding site" evidence="1">
    <location>
        <position position="323"/>
    </location>
    <ligand>
        <name>FAD</name>
        <dbReference type="ChEBI" id="CHEBI:57692"/>
    </ligand>
</feature>
<feature type="binding site" evidence="1">
    <location>
        <begin position="334"/>
        <end position="335"/>
    </location>
    <ligand>
        <name>FAD</name>
        <dbReference type="ChEBI" id="CHEBI:57692"/>
    </ligand>
</feature>
<name>NDHA_MYCTU</name>
<dbReference type="EC" id="1.6.5.9" evidence="3"/>
<dbReference type="EMBL" id="AL123456">
    <property type="protein sequence ID" value="CCP43122.1"/>
    <property type="molecule type" value="Genomic_DNA"/>
</dbReference>
<dbReference type="RefSeq" id="NP_214906.1">
    <property type="nucleotide sequence ID" value="NC_000962.3"/>
</dbReference>
<dbReference type="RefSeq" id="WP_003898428.1">
    <property type="nucleotide sequence ID" value="NZ_NVQJ01000002.1"/>
</dbReference>
<dbReference type="SMR" id="P95200"/>
<dbReference type="FunCoup" id="P95200">
    <property type="interactions" value="150"/>
</dbReference>
<dbReference type="STRING" id="83332.Rv0392c"/>
<dbReference type="BindingDB" id="P95200"/>
<dbReference type="ChEMBL" id="CHEMBL5169229"/>
<dbReference type="PaxDb" id="83332-Rv0392c"/>
<dbReference type="DNASU" id="886430"/>
<dbReference type="GeneID" id="886430"/>
<dbReference type="KEGG" id="mtu:Rv0392c"/>
<dbReference type="KEGG" id="mtv:RVBD_0392c"/>
<dbReference type="PATRIC" id="fig|83332.111.peg.431"/>
<dbReference type="TubercuList" id="Rv0392c"/>
<dbReference type="eggNOG" id="COG1252">
    <property type="taxonomic scope" value="Bacteria"/>
</dbReference>
<dbReference type="InParanoid" id="P95200"/>
<dbReference type="OrthoDB" id="9781621at2"/>
<dbReference type="PhylomeDB" id="P95200"/>
<dbReference type="PHI-base" id="PHI:3629"/>
<dbReference type="Proteomes" id="UP000001584">
    <property type="component" value="Chromosome"/>
</dbReference>
<dbReference type="GO" id="GO:0005829">
    <property type="term" value="C:cytosol"/>
    <property type="evidence" value="ECO:0007005"/>
    <property type="project" value="MTBBASE"/>
</dbReference>
<dbReference type="GO" id="GO:0005886">
    <property type="term" value="C:plasma membrane"/>
    <property type="evidence" value="ECO:0007005"/>
    <property type="project" value="MTBBASE"/>
</dbReference>
<dbReference type="GO" id="GO:0003955">
    <property type="term" value="F:NAD(P)H dehydrogenase (quinone) activity"/>
    <property type="evidence" value="ECO:0000314"/>
    <property type="project" value="MTBBASE"/>
</dbReference>
<dbReference type="GO" id="GO:0050136">
    <property type="term" value="F:NADH:ubiquinone reductase (non-electrogenic) activity"/>
    <property type="evidence" value="ECO:0007669"/>
    <property type="project" value="UniProtKB-EC"/>
</dbReference>
<dbReference type="GO" id="GO:0016491">
    <property type="term" value="F:oxidoreductase activity"/>
    <property type="evidence" value="ECO:0000318"/>
    <property type="project" value="GO_Central"/>
</dbReference>
<dbReference type="GO" id="GO:0051701">
    <property type="term" value="P:biological process involved in interaction with host"/>
    <property type="evidence" value="ECO:0000315"/>
    <property type="project" value="MTBBASE"/>
</dbReference>
<dbReference type="FunFam" id="3.50.50.100:FF:000011">
    <property type="entry name" value="Membrane NADH dehydrogenase"/>
    <property type="match status" value="1"/>
</dbReference>
<dbReference type="Gene3D" id="3.50.50.100">
    <property type="match status" value="1"/>
</dbReference>
<dbReference type="InterPro" id="IPR036188">
    <property type="entry name" value="FAD/NAD-bd_sf"/>
</dbReference>
<dbReference type="InterPro" id="IPR023753">
    <property type="entry name" value="FAD/NAD-binding_dom"/>
</dbReference>
<dbReference type="InterPro" id="IPR045024">
    <property type="entry name" value="NDH-2"/>
</dbReference>
<dbReference type="PANTHER" id="PTHR43706:SF47">
    <property type="entry name" value="EXTERNAL NADH-UBIQUINONE OXIDOREDUCTASE 1, MITOCHONDRIAL-RELATED"/>
    <property type="match status" value="1"/>
</dbReference>
<dbReference type="PANTHER" id="PTHR43706">
    <property type="entry name" value="NADH DEHYDROGENASE"/>
    <property type="match status" value="1"/>
</dbReference>
<dbReference type="Pfam" id="PF07992">
    <property type="entry name" value="Pyr_redox_2"/>
    <property type="match status" value="1"/>
</dbReference>
<dbReference type="PRINTS" id="PR00368">
    <property type="entry name" value="FADPNR"/>
</dbReference>
<dbReference type="PRINTS" id="PR00411">
    <property type="entry name" value="PNDRDTASEI"/>
</dbReference>
<dbReference type="SUPFAM" id="SSF51905">
    <property type="entry name" value="FAD/NAD(P)-binding domain"/>
    <property type="match status" value="1"/>
</dbReference>
<organism>
    <name type="scientific">Mycobacterium tuberculosis (strain ATCC 25618 / H37Rv)</name>
    <dbReference type="NCBI Taxonomy" id="83332"/>
    <lineage>
        <taxon>Bacteria</taxon>
        <taxon>Bacillati</taxon>
        <taxon>Actinomycetota</taxon>
        <taxon>Actinomycetes</taxon>
        <taxon>Mycobacteriales</taxon>
        <taxon>Mycobacteriaceae</taxon>
        <taxon>Mycobacterium</taxon>
        <taxon>Mycobacterium tuberculosis complex</taxon>
    </lineage>
</organism>
<gene>
    <name evidence="6" type="primary">ndhA</name>
    <name evidence="9" type="ordered locus">Rv0392c</name>
</gene>
<reference key="1">
    <citation type="journal article" date="1998" name="Nature">
        <title>Deciphering the biology of Mycobacterium tuberculosis from the complete genome sequence.</title>
        <authorList>
            <person name="Cole S.T."/>
            <person name="Brosch R."/>
            <person name="Parkhill J."/>
            <person name="Garnier T."/>
            <person name="Churcher C.M."/>
            <person name="Harris D.E."/>
            <person name="Gordon S.V."/>
            <person name="Eiglmeier K."/>
            <person name="Gas S."/>
            <person name="Barry C.E. III"/>
            <person name="Tekaia F."/>
            <person name="Badcock K."/>
            <person name="Basham D."/>
            <person name="Brown D."/>
            <person name="Chillingworth T."/>
            <person name="Connor R."/>
            <person name="Davies R.M."/>
            <person name="Devlin K."/>
            <person name="Feltwell T."/>
            <person name="Gentles S."/>
            <person name="Hamlin N."/>
            <person name="Holroyd S."/>
            <person name="Hornsby T."/>
            <person name="Jagels K."/>
            <person name="Krogh A."/>
            <person name="McLean J."/>
            <person name="Moule S."/>
            <person name="Murphy L.D."/>
            <person name="Oliver S."/>
            <person name="Osborne J."/>
            <person name="Quail M.A."/>
            <person name="Rajandream M.A."/>
            <person name="Rogers J."/>
            <person name="Rutter S."/>
            <person name="Seeger K."/>
            <person name="Skelton S."/>
            <person name="Squares S."/>
            <person name="Squares R."/>
            <person name="Sulston J.E."/>
            <person name="Taylor K."/>
            <person name="Whitehead S."/>
            <person name="Barrell B.G."/>
        </authorList>
    </citation>
    <scope>NUCLEOTIDE SEQUENCE [LARGE SCALE GENOMIC DNA]</scope>
    <source>
        <strain>ATCC 25618 / H37Rv</strain>
    </source>
</reference>
<reference key="2">
    <citation type="journal article" date="2005" name="Proc. Natl. Acad. Sci. U.S.A.">
        <title>Inhibitors of type II NADH:menaquinone oxidoreductase represent a class of antitubercular drugs.</title>
        <authorList>
            <person name="Weinstein E.A."/>
            <person name="Yano T."/>
            <person name="Li L.S."/>
            <person name="Avarbock D."/>
            <person name="Avarbock A."/>
            <person name="Helm D."/>
            <person name="McColm A.A."/>
            <person name="Duncan K."/>
            <person name="Lonsdale J.T."/>
            <person name="Rubin H."/>
        </authorList>
    </citation>
    <scope>FUNCTION</scope>
    <scope>CATALYTIC ACTIVITY</scope>
    <scope>ACTIVITY REGULATION</scope>
    <scope>SUBCELLULAR LOCATION</scope>
    <source>
        <strain>H37Rv</strain>
    </source>
</reference>
<reference key="3">
    <citation type="journal article" date="2011" name="Mol. Cell. Proteomics">
        <title>Proteogenomic analysis of Mycobacterium tuberculosis by high resolution mass spectrometry.</title>
        <authorList>
            <person name="Kelkar D.S."/>
            <person name="Kumar D."/>
            <person name="Kumar P."/>
            <person name="Balakrishnan L."/>
            <person name="Muthusamy B."/>
            <person name="Yadav A.K."/>
            <person name="Shrivastava P."/>
            <person name="Marimuthu A."/>
            <person name="Anand S."/>
            <person name="Sundaram H."/>
            <person name="Kingsbury R."/>
            <person name="Harsha H.C."/>
            <person name="Nair B."/>
            <person name="Prasad T.S."/>
            <person name="Chauhan D.S."/>
            <person name="Katoch K."/>
            <person name="Katoch V.M."/>
            <person name="Kumar P."/>
            <person name="Chaerkady R."/>
            <person name="Ramachandran S."/>
            <person name="Dash D."/>
            <person name="Pandey A."/>
        </authorList>
    </citation>
    <scope>IDENTIFICATION BY MASS SPECTROMETRY [LARGE SCALE ANALYSIS]</scope>
    <source>
        <strain>ATCC 25618 / H37Rv</strain>
    </source>
</reference>
<reference key="4">
    <citation type="journal article" date="2014" name="Gene">
        <title>Roles of the two type II NADH dehydrogenases in the survival of Mycobacterium tuberculosis in vitro.</title>
        <authorList>
            <person name="Awasthy D."/>
            <person name="Ambady A."/>
            <person name="Narayana A."/>
            <person name="Morayya S."/>
            <person name="Sharma U."/>
        </authorList>
    </citation>
    <scope>DISRUPTION PHENOTYPE</scope>
    <source>
        <strain>ATCC 27294 / TMC 102 / H37Rv</strain>
    </source>
</reference>
<reference key="5">
    <citation type="journal article" date="2018" name="Proc. Natl. Acad. Sci. U.S.A.">
        <title>Plasticity of Mycobacterium tuberculosis NADH dehydrogenases and their role in virulence.</title>
        <authorList>
            <person name="Vilcheze C."/>
            <person name="Weinrick B."/>
            <person name="Leung L.W."/>
            <person name="Jacobs W.R. Jr."/>
        </authorList>
    </citation>
    <scope>FUNCTION</scope>
    <scope>DISRUPTION PHENOTYPE</scope>
</reference>
<comment type="function">
    <text evidence="3 5">Alternative, nonproton pumping NADH:quinone oxidoreductase that delivers electrons to the respiratory chain by oxidation of NADH and reduction of quinones.</text>
</comment>
<comment type="catalytic activity">
    <reaction evidence="3">
        <text>a quinone + NADH + H(+) = a quinol + NAD(+)</text>
        <dbReference type="Rhea" id="RHEA:46160"/>
        <dbReference type="ChEBI" id="CHEBI:15378"/>
        <dbReference type="ChEBI" id="CHEBI:24646"/>
        <dbReference type="ChEBI" id="CHEBI:57540"/>
        <dbReference type="ChEBI" id="CHEBI:57945"/>
        <dbReference type="ChEBI" id="CHEBI:132124"/>
        <dbReference type="EC" id="1.6.5.9"/>
    </reaction>
</comment>
<comment type="catalytic activity">
    <reaction evidence="3">
        <text>a menaquinone + NADH + H(+) = a menaquinol + NAD(+)</text>
        <dbReference type="Rhea" id="RHEA:29235"/>
        <dbReference type="Rhea" id="RHEA-COMP:9537"/>
        <dbReference type="Rhea" id="RHEA-COMP:9539"/>
        <dbReference type="ChEBI" id="CHEBI:15378"/>
        <dbReference type="ChEBI" id="CHEBI:16374"/>
        <dbReference type="ChEBI" id="CHEBI:18151"/>
        <dbReference type="ChEBI" id="CHEBI:57540"/>
        <dbReference type="ChEBI" id="CHEBI:57945"/>
    </reaction>
</comment>
<comment type="cofactor">
    <cofactor evidence="1">
        <name>FAD</name>
        <dbReference type="ChEBI" id="CHEBI:57692"/>
    </cofactor>
    <text evidence="1">Binds 1 FAD per subunit.</text>
</comment>
<comment type="activity regulation">
    <text evidence="3">Inhibited by phenothiazine analogs.</text>
</comment>
<comment type="subcellular location">
    <subcellularLocation>
        <location evidence="3">Cell inner membrane</location>
        <topology evidence="2">Single-pass membrane protein</topology>
    </subcellularLocation>
</comment>
<comment type="disruption phenotype">
    <text evidence="4 5">Deletion of the gene does not affect virulence in mice (PubMed:29382761). Deletion of the gene does not induce any major redox perturbation in M.tuberculosis (PubMed:29382761). Non-essential, can be deleted without causing any adverse effects in vitro (PubMed:25128581). The ndh-ndhA double knockout could not be obtained, suggesting that at least one type II NADH dehydrogenase is required for M.tuberculosis growth (PubMed:29382761).</text>
</comment>
<comment type="similarity">
    <text evidence="8">Belongs to the NADH dehydrogenase family.</text>
</comment>
<keyword id="KW-0997">Cell inner membrane</keyword>
<keyword id="KW-1003">Cell membrane</keyword>
<keyword id="KW-0274">FAD</keyword>
<keyword id="KW-0285">Flavoprotein</keyword>
<keyword id="KW-0472">Membrane</keyword>
<keyword id="KW-0520">NAD</keyword>
<keyword id="KW-0560">Oxidoreductase</keyword>
<keyword id="KW-1185">Reference proteome</keyword>
<keyword id="KW-0812">Transmembrane</keyword>
<keyword id="KW-1133">Transmembrane helix</keyword>
<evidence type="ECO:0000250" key="1">
    <source>
        <dbReference type="UniProtKB" id="Q2FZV7"/>
    </source>
</evidence>
<evidence type="ECO:0000255" key="2"/>
<evidence type="ECO:0000269" key="3">
    <source>
    </source>
</evidence>
<evidence type="ECO:0000269" key="4">
    <source>
    </source>
</evidence>
<evidence type="ECO:0000269" key="5">
    <source>
    </source>
</evidence>
<evidence type="ECO:0000303" key="6">
    <source>
    </source>
</evidence>
<evidence type="ECO:0000303" key="7">
    <source>
    </source>
</evidence>
<evidence type="ECO:0000305" key="8"/>
<evidence type="ECO:0000312" key="9">
    <source>
        <dbReference type="EMBL" id="CCP43122.1"/>
    </source>
</evidence>
<accession>P95200</accession>
<accession>F2GN78</accession>
<accession>I6WYA2</accession>
<accession>Q7D9W6</accession>
<protein>
    <recommendedName>
        <fullName evidence="8">Type II NADH:quinone oxidoreductase NdhA</fullName>
        <ecNumber evidence="3">1.6.5.9</ecNumber>
    </recommendedName>
    <alternativeName>
        <fullName evidence="7">Type II NADH dehydrogenase NdhA</fullName>
    </alternativeName>
</protein>
<proteinExistence type="evidence at protein level"/>
<sequence>MTLSSGEPSAVGGRHRVVIIGSGFGGLNAAKALKRADVDITLISKTTTHLFQPLLYQVATGILSEGDIAPTTRLILRRQKNVRVLLGEVNAIDLKAQTVTSKLMDMTTVTPYDSLIVAAGAQQSYFGNDEFATFAPGMKTIDDALELRGRILGAFEAAEVSTDHAERERRLTFVVVGAGPTGVEVAGQIVELAERTLAGAFRTITPSECRVILLDAAPAVLPPMGPKLGLKAQRRLEKMDVEVQLNAMVTAVDYKGITIKEKDGGERRIECACKVWAAGVAASPLGKMIAEGSDGTEIDRAGRVIVEPDLTVKGHPNVFVVGDLMFVPGVPGVAQGAIQGARYATTVIKHMVKGNDDPANRKPFHYFNKGSMATISRHSAVAQVGKLEFAGYFAWLAWLVLHLVYLVGYRNRIAALFAWGISFMGRARGQMAITSQMIYARLVMTLMEQQAQGALAAAEQAEHAEQEAAG</sequence>